<proteinExistence type="evidence at transcript level"/>
<protein>
    <recommendedName>
        <fullName evidence="12">Histidine-containing phosphotransfer protein 1</fullName>
    </recommendedName>
    <alternativeName>
        <fullName evidence="11">OsAHP1</fullName>
    </alternativeName>
    <alternativeName>
        <fullName evidence="15">OsHP1</fullName>
    </alternativeName>
    <alternativeName>
        <fullName evidence="13">OsHP2</fullName>
    </alternativeName>
    <alternativeName>
        <fullName evidence="14">OsHPt1</fullName>
    </alternativeName>
    <alternativeName>
        <fullName evidence="8">OsHpt2</fullName>
    </alternativeName>
</protein>
<name>OHP1_ORYSJ</name>
<feature type="chain" id="PRO_0000433565" description="Histidine-containing phosphotransfer protein 1">
    <location>
        <begin position="1"/>
        <end position="147"/>
    </location>
</feature>
<feature type="domain" description="HPt" evidence="2">
    <location>
        <begin position="38"/>
        <end position="133"/>
    </location>
</feature>
<feature type="modified residue" description="Phosphohistidine" evidence="2">
    <location>
        <position position="79"/>
    </location>
</feature>
<feature type="sequence conflict" description="In Ref. 3; AAS90601." evidence="12" ref="3">
    <original>S</original>
    <variation>G</variation>
    <location>
        <position position="8"/>
    </location>
</feature>
<feature type="sequence conflict" description="In Ref. 3; AAS90601." evidence="12" ref="3">
    <original>Q</original>
    <variation>R</variation>
    <location>
        <position position="80"/>
    </location>
</feature>
<feature type="sequence conflict" description="In Ref. 3; AAS90601." evidence="12" ref="3">
    <original>R</original>
    <variation>K</variation>
    <location>
        <position position="107"/>
    </location>
</feature>
<feature type="sequence conflict" description="In Ref. 3; AAS90601." evidence="12" ref="3">
    <original>C</original>
    <variation>W</variation>
    <location>
        <position position="143"/>
    </location>
</feature>
<gene>
    <name evidence="10" type="primary">AHP1</name>
    <name evidence="13" type="synonym">HP2</name>
    <name evidence="14" type="synonym">HPT1</name>
    <name evidence="9" type="synonym">OHP1</name>
    <name evidence="17" type="ordered locus">Os08g0557700</name>
    <name evidence="12" type="ordered locus">LOC_Os08g44350</name>
    <name evidence="16" type="ORF">OJ1150_A11.26</name>
    <name evidence="18" type="ORF">OsJ_28261</name>
</gene>
<keyword id="KW-0932">Cytokinin signaling pathway</keyword>
<keyword id="KW-0963">Cytoplasm</keyword>
<keyword id="KW-0539">Nucleus</keyword>
<keyword id="KW-0597">Phosphoprotein</keyword>
<keyword id="KW-1185">Reference proteome</keyword>
<keyword id="KW-0716">Sensory transduction</keyword>
<keyword id="KW-0902">Two-component regulatory system</keyword>
<dbReference type="EMBL" id="BR000248">
    <property type="protein sequence ID" value="FAA00252.1"/>
    <property type="molecule type" value="Genomic_DNA"/>
</dbReference>
<dbReference type="EMBL" id="AY345242">
    <property type="protein sequence ID" value="AAQ24030.1"/>
    <property type="molecule type" value="mRNA"/>
</dbReference>
<dbReference type="EMBL" id="AY581257">
    <property type="protein sequence ID" value="AAS90601.1"/>
    <property type="molecule type" value="mRNA"/>
</dbReference>
<dbReference type="EMBL" id="AY569613">
    <property type="protein sequence ID" value="AAV31128.1"/>
    <property type="molecule type" value="mRNA"/>
</dbReference>
<dbReference type="EMBL" id="AP003928">
    <property type="protein sequence ID" value="BAD09087.1"/>
    <property type="molecule type" value="Genomic_DNA"/>
</dbReference>
<dbReference type="EMBL" id="AP008214">
    <property type="protein sequence ID" value="BAF24401.1"/>
    <property type="molecule type" value="Genomic_DNA"/>
</dbReference>
<dbReference type="EMBL" id="AP014964">
    <property type="protein sequence ID" value="BAT06668.1"/>
    <property type="molecule type" value="Genomic_DNA"/>
</dbReference>
<dbReference type="EMBL" id="CM000145">
    <property type="protein sequence ID" value="EEE69138.1"/>
    <property type="molecule type" value="Genomic_DNA"/>
</dbReference>
<dbReference type="EMBL" id="AK061111">
    <property type="protein sequence ID" value="BAG87734.1"/>
    <property type="molecule type" value="mRNA"/>
</dbReference>
<dbReference type="RefSeq" id="XP_015648297.1">
    <property type="nucleotide sequence ID" value="XM_015792811.1"/>
</dbReference>
<dbReference type="SMR" id="Q6VAK3"/>
<dbReference type="FunCoup" id="Q6VAK3">
    <property type="interactions" value="25"/>
</dbReference>
<dbReference type="STRING" id="39947.Q6VAK3"/>
<dbReference type="PaxDb" id="39947-Q6VAK3"/>
<dbReference type="EnsemblPlants" id="Os08t0557700-01">
    <property type="protein sequence ID" value="Os08t0557700-01"/>
    <property type="gene ID" value="Os08g0557700"/>
</dbReference>
<dbReference type="Gramene" id="Os08t0557700-01">
    <property type="protein sequence ID" value="Os08t0557700-01"/>
    <property type="gene ID" value="Os08g0557700"/>
</dbReference>
<dbReference type="KEGG" id="dosa:Os08g0557700"/>
<dbReference type="eggNOG" id="KOG4747">
    <property type="taxonomic scope" value="Eukaryota"/>
</dbReference>
<dbReference type="HOGENOM" id="CLU_111777_3_0_1"/>
<dbReference type="InParanoid" id="Q6VAK3"/>
<dbReference type="OMA" id="QNTDACL"/>
<dbReference type="OrthoDB" id="1673781at2759"/>
<dbReference type="Proteomes" id="UP000000763">
    <property type="component" value="Chromosome 8"/>
</dbReference>
<dbReference type="Proteomes" id="UP000007752">
    <property type="component" value="Chromosome 8"/>
</dbReference>
<dbReference type="Proteomes" id="UP000059680">
    <property type="component" value="Chromosome 8"/>
</dbReference>
<dbReference type="GO" id="GO:0005737">
    <property type="term" value="C:cytoplasm"/>
    <property type="evidence" value="ECO:0000318"/>
    <property type="project" value="GO_Central"/>
</dbReference>
<dbReference type="GO" id="GO:0005829">
    <property type="term" value="C:cytosol"/>
    <property type="evidence" value="ECO:0000314"/>
    <property type="project" value="UniProtKB"/>
</dbReference>
<dbReference type="GO" id="GO:0005634">
    <property type="term" value="C:nucleus"/>
    <property type="evidence" value="ECO:0000314"/>
    <property type="project" value="UniProtKB"/>
</dbReference>
<dbReference type="GO" id="GO:0009927">
    <property type="term" value="F:histidine phosphotransfer kinase activity"/>
    <property type="evidence" value="ECO:0000318"/>
    <property type="project" value="GO_Central"/>
</dbReference>
<dbReference type="GO" id="GO:0043424">
    <property type="term" value="F:protein histidine kinase binding"/>
    <property type="evidence" value="ECO:0000318"/>
    <property type="project" value="GO_Central"/>
</dbReference>
<dbReference type="GO" id="GO:0009736">
    <property type="term" value="P:cytokinin-activated signaling pathway"/>
    <property type="evidence" value="ECO:0000318"/>
    <property type="project" value="GO_Central"/>
</dbReference>
<dbReference type="GO" id="GO:0000160">
    <property type="term" value="P:phosphorelay signal transduction system"/>
    <property type="evidence" value="ECO:0000318"/>
    <property type="project" value="GO_Central"/>
</dbReference>
<dbReference type="GO" id="GO:0080038">
    <property type="term" value="P:positive regulation of cytokinin-activated signaling pathway"/>
    <property type="evidence" value="ECO:0000315"/>
    <property type="project" value="UniProtKB"/>
</dbReference>
<dbReference type="CDD" id="cd00088">
    <property type="entry name" value="HPT"/>
    <property type="match status" value="1"/>
</dbReference>
<dbReference type="FunFam" id="1.20.120.160:FF:000001">
    <property type="entry name" value="Histidine-containing phosphotransfer protein 1"/>
    <property type="match status" value="1"/>
</dbReference>
<dbReference type="Gene3D" id="1.20.120.160">
    <property type="entry name" value="HPT domain"/>
    <property type="match status" value="1"/>
</dbReference>
<dbReference type="InterPro" id="IPR045871">
    <property type="entry name" value="AHP1-5/YPD1"/>
</dbReference>
<dbReference type="InterPro" id="IPR036641">
    <property type="entry name" value="HPT_dom_sf"/>
</dbReference>
<dbReference type="InterPro" id="IPR008207">
    <property type="entry name" value="Sig_transdc_His_kin_Hpt_dom"/>
</dbReference>
<dbReference type="PANTHER" id="PTHR28242:SF47">
    <property type="entry name" value="HISTIDINE-CONTAINING PHOSPHOTRANSFER PROTEIN 1"/>
    <property type="match status" value="1"/>
</dbReference>
<dbReference type="PANTHER" id="PTHR28242">
    <property type="entry name" value="PHOSPHORELAY INTERMEDIATE PROTEIN YPD1"/>
    <property type="match status" value="1"/>
</dbReference>
<dbReference type="Pfam" id="PF01627">
    <property type="entry name" value="Hpt"/>
    <property type="match status" value="1"/>
</dbReference>
<dbReference type="SUPFAM" id="SSF47226">
    <property type="entry name" value="Histidine-containing phosphotransfer domain, HPT domain"/>
    <property type="match status" value="1"/>
</dbReference>
<dbReference type="PROSITE" id="PS50894">
    <property type="entry name" value="HPT"/>
    <property type="match status" value="1"/>
</dbReference>
<evidence type="ECO:0000250" key="1">
    <source>
        <dbReference type="UniProtKB" id="Q8L9T7"/>
    </source>
</evidence>
<evidence type="ECO:0000255" key="2">
    <source>
        <dbReference type="PROSITE-ProRule" id="PRU00110"/>
    </source>
</evidence>
<evidence type="ECO:0000269" key="3">
    <source>
    </source>
</evidence>
<evidence type="ECO:0000269" key="4">
    <source>
    </source>
</evidence>
<evidence type="ECO:0000269" key="5">
    <source>
    </source>
</evidence>
<evidence type="ECO:0000269" key="6">
    <source>
    </source>
</evidence>
<evidence type="ECO:0000269" key="7">
    <source>
    </source>
</evidence>
<evidence type="ECO:0000303" key="8">
    <source>
    </source>
</evidence>
<evidence type="ECO:0000303" key="9">
    <source>
    </source>
</evidence>
<evidence type="ECO:0000303" key="10">
    <source>
    </source>
</evidence>
<evidence type="ECO:0000303" key="11">
    <source>
    </source>
</evidence>
<evidence type="ECO:0000305" key="12"/>
<evidence type="ECO:0000312" key="13">
    <source>
        <dbReference type="EMBL" id="AAQ24030.1"/>
    </source>
</evidence>
<evidence type="ECO:0000312" key="14">
    <source>
        <dbReference type="EMBL" id="AAS90601.1"/>
    </source>
</evidence>
<evidence type="ECO:0000312" key="15">
    <source>
        <dbReference type="EMBL" id="AAV31128.1"/>
    </source>
</evidence>
<evidence type="ECO:0000312" key="16">
    <source>
        <dbReference type="EMBL" id="BAD09087.1"/>
    </source>
</evidence>
<evidence type="ECO:0000312" key="17">
    <source>
        <dbReference type="EMBL" id="BAF24401.1"/>
    </source>
</evidence>
<evidence type="ECO:0000312" key="18">
    <source>
        <dbReference type="EMBL" id="EEE69138.1"/>
    </source>
</evidence>
<accession>Q6VAK3</accession>
<accession>A0A0P0XJB0</accession>
<accession>Q6PT60</accession>
<reference key="1">
    <citation type="journal article" date="2006" name="Gene">
        <title>Identification and characterization of cytokinin-signalling gene families in rice.</title>
        <authorList>
            <person name="Ito Y."/>
            <person name="Kurata N."/>
        </authorList>
    </citation>
    <scope>NUCLEOTIDE SEQUENCE [GENOMIC DNA]</scope>
    <scope>TISSUE SPECIFICITY</scope>
    <source>
        <strain>cv. Nipponbare</strain>
    </source>
</reference>
<reference key="2">
    <citation type="submission" date="2003-07" db="EMBL/GenBank/DDBJ databases">
        <title>Characterization of genes for two-component phosphorelay mediators with a single HPt domain in Oryza sativa.</title>
        <authorList>
            <person name="Gu Z.M."/>
            <person name="Zhang H.S."/>
            <person name="Huang J."/>
        </authorList>
    </citation>
    <scope>NUCLEOTIDE SEQUENCE [MRNA]</scope>
</reference>
<reference key="3">
    <citation type="submission" date="2004-03" db="EMBL/GenBank/DDBJ databases">
        <title>Characterization of two downstream proteins in a possible two-component system in the early responses of rice to infection by a fungal pathogen.</title>
        <authorList>
            <person name="Qu L."/>
            <person name="Gu H."/>
        </authorList>
    </citation>
    <scope>NUCLEOTIDE SEQUENCE [MRNA]</scope>
    <source>
        <strain>cv. Zhonghua 11</strain>
    </source>
</reference>
<reference key="4">
    <citation type="submission" date="2004-03" db="EMBL/GenBank/DDBJ databases">
        <title>Regulation of rice histidine-containing phosphotransfer protein gene expression by nutrient availability.</title>
        <authorList>
            <person name="Yun S.J."/>
            <person name="Park M.-R."/>
            <person name="Park M.-H."/>
            <person name="Lim J.-H."/>
        </authorList>
    </citation>
    <scope>NUCLEOTIDE SEQUENCE [MRNA]</scope>
    <source>
        <strain>cv. Dongjin</strain>
    </source>
</reference>
<reference key="5">
    <citation type="journal article" date="2005" name="Nature">
        <title>The map-based sequence of the rice genome.</title>
        <authorList>
            <consortium name="International rice genome sequencing project (IRGSP)"/>
        </authorList>
    </citation>
    <scope>NUCLEOTIDE SEQUENCE [LARGE SCALE GENOMIC DNA]</scope>
    <source>
        <strain>cv. Nipponbare</strain>
    </source>
</reference>
<reference key="6">
    <citation type="journal article" date="2008" name="Nucleic Acids Res.">
        <title>The rice annotation project database (RAP-DB): 2008 update.</title>
        <authorList>
            <consortium name="The rice annotation project (RAP)"/>
        </authorList>
    </citation>
    <scope>GENOME REANNOTATION</scope>
    <source>
        <strain>cv. Nipponbare</strain>
    </source>
</reference>
<reference key="7">
    <citation type="journal article" date="2013" name="Rice">
        <title>Improvement of the Oryza sativa Nipponbare reference genome using next generation sequence and optical map data.</title>
        <authorList>
            <person name="Kawahara Y."/>
            <person name="de la Bastide M."/>
            <person name="Hamilton J.P."/>
            <person name="Kanamori H."/>
            <person name="McCombie W.R."/>
            <person name="Ouyang S."/>
            <person name="Schwartz D.C."/>
            <person name="Tanaka T."/>
            <person name="Wu J."/>
            <person name="Zhou S."/>
            <person name="Childs K.L."/>
            <person name="Davidson R.M."/>
            <person name="Lin H."/>
            <person name="Quesada-Ocampo L."/>
            <person name="Vaillancourt B."/>
            <person name="Sakai H."/>
            <person name="Lee S.S."/>
            <person name="Kim J."/>
            <person name="Numa H."/>
            <person name="Itoh T."/>
            <person name="Buell C.R."/>
            <person name="Matsumoto T."/>
        </authorList>
    </citation>
    <scope>GENOME REANNOTATION</scope>
    <source>
        <strain>cv. Nipponbare</strain>
    </source>
</reference>
<reference key="8">
    <citation type="journal article" date="2005" name="PLoS Biol.">
        <title>The genomes of Oryza sativa: a history of duplications.</title>
        <authorList>
            <person name="Yu J."/>
            <person name="Wang J."/>
            <person name="Lin W."/>
            <person name="Li S."/>
            <person name="Li H."/>
            <person name="Zhou J."/>
            <person name="Ni P."/>
            <person name="Dong W."/>
            <person name="Hu S."/>
            <person name="Zeng C."/>
            <person name="Zhang J."/>
            <person name="Zhang Y."/>
            <person name="Li R."/>
            <person name="Xu Z."/>
            <person name="Li S."/>
            <person name="Li X."/>
            <person name="Zheng H."/>
            <person name="Cong L."/>
            <person name="Lin L."/>
            <person name="Yin J."/>
            <person name="Geng J."/>
            <person name="Li G."/>
            <person name="Shi J."/>
            <person name="Liu J."/>
            <person name="Lv H."/>
            <person name="Li J."/>
            <person name="Wang J."/>
            <person name="Deng Y."/>
            <person name="Ran L."/>
            <person name="Shi X."/>
            <person name="Wang X."/>
            <person name="Wu Q."/>
            <person name="Li C."/>
            <person name="Ren X."/>
            <person name="Wang J."/>
            <person name="Wang X."/>
            <person name="Li D."/>
            <person name="Liu D."/>
            <person name="Zhang X."/>
            <person name="Ji Z."/>
            <person name="Zhao W."/>
            <person name="Sun Y."/>
            <person name="Zhang Z."/>
            <person name="Bao J."/>
            <person name="Han Y."/>
            <person name="Dong L."/>
            <person name="Ji J."/>
            <person name="Chen P."/>
            <person name="Wu S."/>
            <person name="Liu J."/>
            <person name="Xiao Y."/>
            <person name="Bu D."/>
            <person name="Tan J."/>
            <person name="Yang L."/>
            <person name="Ye C."/>
            <person name="Zhang J."/>
            <person name="Xu J."/>
            <person name="Zhou Y."/>
            <person name="Yu Y."/>
            <person name="Zhang B."/>
            <person name="Zhuang S."/>
            <person name="Wei H."/>
            <person name="Liu B."/>
            <person name="Lei M."/>
            <person name="Yu H."/>
            <person name="Li Y."/>
            <person name="Xu H."/>
            <person name="Wei S."/>
            <person name="He X."/>
            <person name="Fang L."/>
            <person name="Zhang Z."/>
            <person name="Zhang Y."/>
            <person name="Huang X."/>
            <person name="Su Z."/>
            <person name="Tong W."/>
            <person name="Li J."/>
            <person name="Tong Z."/>
            <person name="Li S."/>
            <person name="Ye J."/>
            <person name="Wang L."/>
            <person name="Fang L."/>
            <person name="Lei T."/>
            <person name="Chen C.-S."/>
            <person name="Chen H.-C."/>
            <person name="Xu Z."/>
            <person name="Li H."/>
            <person name="Huang H."/>
            <person name="Zhang F."/>
            <person name="Xu H."/>
            <person name="Li N."/>
            <person name="Zhao C."/>
            <person name="Li S."/>
            <person name="Dong L."/>
            <person name="Huang Y."/>
            <person name="Li L."/>
            <person name="Xi Y."/>
            <person name="Qi Q."/>
            <person name="Li W."/>
            <person name="Zhang B."/>
            <person name="Hu W."/>
            <person name="Zhang Y."/>
            <person name="Tian X."/>
            <person name="Jiao Y."/>
            <person name="Liang X."/>
            <person name="Jin J."/>
            <person name="Gao L."/>
            <person name="Zheng W."/>
            <person name="Hao B."/>
            <person name="Liu S.-M."/>
            <person name="Wang W."/>
            <person name="Yuan L."/>
            <person name="Cao M."/>
            <person name="McDermott J."/>
            <person name="Samudrala R."/>
            <person name="Wang J."/>
            <person name="Wong G.K.-S."/>
            <person name="Yang H."/>
        </authorList>
    </citation>
    <scope>NUCLEOTIDE SEQUENCE [LARGE SCALE GENOMIC DNA]</scope>
    <source>
        <strain>cv. Nipponbare</strain>
    </source>
</reference>
<reference key="9">
    <citation type="journal article" date="2003" name="Science">
        <title>Collection, mapping, and annotation of over 28,000 cDNA clones from japonica rice.</title>
        <authorList>
            <consortium name="The rice full-length cDNA consortium"/>
        </authorList>
    </citation>
    <scope>NUCLEOTIDE SEQUENCE [LARGE SCALE MRNA]</scope>
    <source>
        <strain>cv. Nipponbare</strain>
    </source>
</reference>
<reference key="10">
    <citation type="journal article" date="2006" name="Plant Physiol.">
        <title>Whole-genome analysis of Oryza sativa reveals similar architecture of two-component signaling machinery with Arabidopsis.</title>
        <authorList>
            <person name="Pareek A."/>
            <person name="Singh A."/>
            <person name="Kumar M."/>
            <person name="Kushwaha H.R."/>
            <person name="Lynn A.M."/>
            <person name="Singla-Pareek S.L."/>
        </authorList>
    </citation>
    <scope>DISRUPTION PHENOTYPE</scope>
</reference>
<reference key="11">
    <citation type="journal article" date="2007" name="Genomics">
        <title>The two-component signal system in rice (Oryza sativa L.): a genome-wide study of cytokinin signal perception and transduction.</title>
        <authorList>
            <person name="Du L."/>
            <person name="Jiao F."/>
            <person name="Chu J."/>
            <person name="Jin G."/>
            <person name="Chen M."/>
            <person name="Wu P."/>
        </authorList>
    </citation>
    <scope>TISSUE SPECIFICITY</scope>
</reference>
<reference key="12">
    <citation type="journal article" date="2007" name="Plant Physiol.">
        <title>Nomenclature for two-component signaling elements of rice.</title>
        <authorList>
            <person name="Schaller G.E."/>
            <person name="Doi K."/>
            <person name="Hwang I."/>
            <person name="Kieber J.J."/>
            <person name="Khurana J.P."/>
            <person name="Kurata N."/>
            <person name="Mizuno T."/>
            <person name="Pareek A."/>
            <person name="Shiu S.H."/>
            <person name="Wu P."/>
            <person name="Yip W.K."/>
        </authorList>
    </citation>
    <scope>GENE FAMILY</scope>
    <scope>NOMENCLATURE</scope>
</reference>
<reference key="13">
    <citation type="journal article" date="2012" name="Plant Physiol.">
        <title>Characterization of genes involved in cytokinin signaling and metabolism from rice.</title>
        <authorList>
            <person name="Tsai Y.C."/>
            <person name="Weir N.R."/>
            <person name="Hill K."/>
            <person name="Zhang W."/>
            <person name="Kim H.J."/>
            <person name="Shiu S.H."/>
            <person name="Schaller G.E."/>
            <person name="Kieber J.J."/>
        </authorList>
    </citation>
    <scope>SUBCELLULAR LOCATION</scope>
</reference>
<reference key="14">
    <citation type="journal article" date="2014" name="Plant Physiol.">
        <title>Two rice authentic histidine phosphotransfer proteins, OsAHP1 and OsAHP2, mediate cytokinin signaling and stress responses in rice.</title>
        <authorList>
            <person name="Sun L."/>
            <person name="Zhang Q."/>
            <person name="Wu J."/>
            <person name="Zhang L."/>
            <person name="Jiao X."/>
            <person name="Zhang S."/>
            <person name="Zhang Z."/>
            <person name="Sun D."/>
            <person name="Lu T."/>
            <person name="Sun Y."/>
        </authorList>
    </citation>
    <scope>FUNCTION</scope>
    <scope>SUBCELLULAR LOCATION</scope>
</reference>
<comment type="function">
    <text evidence="1 7">Functions as a two-component phosphorelay mediators between cytokinin sensor histidine kinases and response regulators (B-type ARRs). Plays an important role in propagating cytokinin signal transduction through the multistep His-to-Asp phosphorelay (By similarity). Functions as a positive regulator of the cytokinin signaling pathway. May play a regulatory role in salt and drought tolerance during plant development (PubMed:24578505).</text>
</comment>
<comment type="subcellular location">
    <subcellularLocation>
        <location evidence="6 7">Cytoplasm</location>
        <location evidence="6 7">Cytosol</location>
    </subcellularLocation>
    <subcellularLocation>
        <location evidence="6 7">Nucleus</location>
    </subcellularLocation>
</comment>
<comment type="tissue specificity">
    <text evidence="4 5">Widely expressed.</text>
</comment>
<comment type="domain">
    <text evidence="12">Histidine-containing phosphotransfer domain (HPt) contains an active histidine that mediates the phosphotransfer.</text>
</comment>
<comment type="PTM">
    <text evidence="12">Two-component system major event consists of a His-to-Asp phosphorelay between a sensor histidine kinase (HK) and a response regulator (RR). In plants, the His-to-Asp phosphorelay involves an additional intermediate named Histidine-containing phosphotransfer protein (HPt). This multistep phosphorelay consists of a His-Asp-His-Asp sequential transfer of a phosphate group between first a His and an Asp of the HK protein, followed by the transfer to a conserved His of the HPt protein and finally the transfer to an Asp in the receiver domain of the RR protein.</text>
</comment>
<comment type="disruption phenotype">
    <text evidence="3">Dwarf, wide leaf and small grain phenotypes.</text>
</comment>
<comment type="miscellaneous">
    <text evidence="7">Plant silencing simultaneously OHP1 and OHP2 exhibit phenotypes for a deficiency in cytokinin signaling, including dwarfism with reduced internode lengths, enhanced lateral root growth, early leaf senescence, and reduced tiller numbers and fertility.</text>
</comment>
<organism>
    <name type="scientific">Oryza sativa subsp. japonica</name>
    <name type="common">Rice</name>
    <dbReference type="NCBI Taxonomy" id="39947"/>
    <lineage>
        <taxon>Eukaryota</taxon>
        <taxon>Viridiplantae</taxon>
        <taxon>Streptophyta</taxon>
        <taxon>Embryophyta</taxon>
        <taxon>Tracheophyta</taxon>
        <taxon>Spermatophyta</taxon>
        <taxon>Magnoliopsida</taxon>
        <taxon>Liliopsida</taxon>
        <taxon>Poales</taxon>
        <taxon>Poaceae</taxon>
        <taxon>BOP clade</taxon>
        <taxon>Oryzoideae</taxon>
        <taxon>Oryzeae</taxon>
        <taxon>Oryzinae</taxon>
        <taxon>Oryza</taxon>
        <taxon>Oryza sativa</taxon>
    </lineage>
</organism>
<sequence length="147" mass="16792">MAAAALTSQLNALVNNMFAMGLLDDQFQQLQMLQDSTAPDFVSEVVTLFCDDGERIICELSRQLEKPNVDFDRVDSYVHQLKGSSASVGAQKVKNTCIQFREFCQQRSRDGCLKTLDLVRTEFYDLRNKFQAMLQLEQQIQACYPKH</sequence>